<protein>
    <recommendedName>
        <fullName>Uncharacterized membrane protein KP93L</fullName>
    </recommendedName>
</protein>
<organism>
    <name type="scientific">African swine fever virus (isolate Tick/South Africa/Pretoriuskop Pr4/1996)</name>
    <name type="common">ASFV</name>
    <dbReference type="NCBI Taxonomy" id="561443"/>
    <lineage>
        <taxon>Viruses</taxon>
        <taxon>Varidnaviria</taxon>
        <taxon>Bamfordvirae</taxon>
        <taxon>Nucleocytoviricota</taxon>
        <taxon>Pokkesviricetes</taxon>
        <taxon>Asfuvirales</taxon>
        <taxon>Asfarviridae</taxon>
        <taxon>Asfivirus</taxon>
        <taxon>African swine fever virus</taxon>
    </lineage>
</organism>
<name>VF93L_ASFP4</name>
<proteinExistence type="inferred from homology"/>
<reference key="1">
    <citation type="submission" date="2003-03" db="EMBL/GenBank/DDBJ databases">
        <title>African swine fever virus genomes.</title>
        <authorList>
            <person name="Kutish G.F."/>
            <person name="Rock D.L."/>
        </authorList>
    </citation>
    <scope>NUCLEOTIDE SEQUENCE [LARGE SCALE GENOMIC DNA]</scope>
</reference>
<organismHost>
    <name type="scientific">Ornithodoros</name>
    <name type="common">relapsing fever ticks</name>
    <dbReference type="NCBI Taxonomy" id="6937"/>
</organismHost>
<organismHost>
    <name type="scientific">Phacochoerus aethiopicus</name>
    <name type="common">Warthog</name>
    <dbReference type="NCBI Taxonomy" id="85517"/>
</organismHost>
<organismHost>
    <name type="scientific">Phacochoerus africanus</name>
    <name type="common">Warthog</name>
    <dbReference type="NCBI Taxonomy" id="41426"/>
</organismHost>
<organismHost>
    <name type="scientific">Potamochoerus larvatus</name>
    <name type="common">Bushpig</name>
    <dbReference type="NCBI Taxonomy" id="273792"/>
</organismHost>
<organismHost>
    <name type="scientific">Sus scrofa</name>
    <name type="common">Pig</name>
    <dbReference type="NCBI Taxonomy" id="9823"/>
</organismHost>
<evidence type="ECO:0000255" key="1"/>
<evidence type="ECO:0000305" key="2"/>
<sequence length="74" mass="8710">MFFLGFLSVTMDYWSTKVKIYSYTLLTLLVITLICYLIHIFCKLRMKKNSVTNNMPPPPPPYTVSSRCSQYYID</sequence>
<accession>P0CAL8</accession>
<dbReference type="EMBL" id="AY261363">
    <property type="status" value="NOT_ANNOTATED_CDS"/>
    <property type="molecule type" value="Genomic_DNA"/>
</dbReference>
<dbReference type="SMR" id="P0CAL8"/>
<dbReference type="Proteomes" id="UP000000859">
    <property type="component" value="Segment"/>
</dbReference>
<dbReference type="GO" id="GO:0033644">
    <property type="term" value="C:host cell membrane"/>
    <property type="evidence" value="ECO:0007669"/>
    <property type="project" value="UniProtKB-SubCell"/>
</dbReference>
<dbReference type="GO" id="GO:0016020">
    <property type="term" value="C:membrane"/>
    <property type="evidence" value="ECO:0007669"/>
    <property type="project" value="UniProtKB-KW"/>
</dbReference>
<keyword id="KW-1043">Host membrane</keyword>
<keyword id="KW-0472">Membrane</keyword>
<keyword id="KW-0812">Transmembrane</keyword>
<keyword id="KW-1133">Transmembrane helix</keyword>
<feature type="chain" id="PRO_0000373750" description="Uncharacterized membrane protein KP93L">
    <location>
        <begin position="1"/>
        <end position="74"/>
    </location>
</feature>
<feature type="transmembrane region" description="Helical" evidence="1">
    <location>
        <begin position="20"/>
        <end position="40"/>
    </location>
</feature>
<gene>
    <name type="ordered locus">Pret-001</name>
</gene>
<comment type="subcellular location">
    <subcellularLocation>
        <location evidence="2">Host membrane</location>
        <topology evidence="2">Single-pass membrane protein</topology>
    </subcellularLocation>
</comment>
<comment type="miscellaneous">
    <text>Encoded wby inverted terminal repeats (ITR).</text>
</comment>
<comment type="similarity">
    <text evidence="2">Belongs to the asfivirus KP93L family.</text>
</comment>